<accession>A6LLM3</accession>
<comment type="function">
    <text evidence="1">Binds to 23S rRNA. Forms part of two intersubunit bridges in the 70S ribosome.</text>
</comment>
<comment type="subunit">
    <text evidence="1">Part of the 50S ribosomal subunit. Forms a cluster with proteins L3 and L19. In the 70S ribosome, L14 and L19 interact and together make contacts with the 16S rRNA in bridges B5 and B8.</text>
</comment>
<comment type="similarity">
    <text evidence="1">Belongs to the universal ribosomal protein uL14 family.</text>
</comment>
<evidence type="ECO:0000255" key="1">
    <source>
        <dbReference type="HAMAP-Rule" id="MF_01367"/>
    </source>
</evidence>
<evidence type="ECO:0000305" key="2"/>
<protein>
    <recommendedName>
        <fullName evidence="1">Large ribosomal subunit protein uL14</fullName>
    </recommendedName>
    <alternativeName>
        <fullName evidence="2">50S ribosomal protein L14</fullName>
    </alternativeName>
</protein>
<organism>
    <name type="scientific">Thermosipho melanesiensis (strain DSM 12029 / CIP 104789 / BI429)</name>
    <dbReference type="NCBI Taxonomy" id="391009"/>
    <lineage>
        <taxon>Bacteria</taxon>
        <taxon>Thermotogati</taxon>
        <taxon>Thermotogota</taxon>
        <taxon>Thermotogae</taxon>
        <taxon>Thermotogales</taxon>
        <taxon>Fervidobacteriaceae</taxon>
        <taxon>Thermosipho</taxon>
    </lineage>
</organism>
<proteinExistence type="inferred from homology"/>
<feature type="chain" id="PRO_1000055742" description="Large ribosomal subunit protein uL14">
    <location>
        <begin position="1"/>
        <end position="122"/>
    </location>
</feature>
<sequence length="122" mass="13520">MIINESYLNVADNSGAKLLRVIRVMGGSRRKWGTVGDIVVCSVRDAVPNGDLKKGDVVKAVIVRTKKEIRRPDGSYIRFDDNAAVVLDKYNEPKGTRVFGPVAKELREKGFMKIVSLAPEVF</sequence>
<name>RL14_THEM4</name>
<keyword id="KW-0687">Ribonucleoprotein</keyword>
<keyword id="KW-0689">Ribosomal protein</keyword>
<keyword id="KW-0694">RNA-binding</keyword>
<keyword id="KW-0699">rRNA-binding</keyword>
<gene>
    <name evidence="1" type="primary">rplN</name>
    <name type="ordered locus">Tmel_0963</name>
</gene>
<reference key="1">
    <citation type="submission" date="2007-05" db="EMBL/GenBank/DDBJ databases">
        <title>Complete sequence of Thermosipho melanesiensis BI429.</title>
        <authorList>
            <consortium name="US DOE Joint Genome Institute"/>
            <person name="Copeland A."/>
            <person name="Lucas S."/>
            <person name="Lapidus A."/>
            <person name="Barry K."/>
            <person name="Glavina del Rio T."/>
            <person name="Dalin E."/>
            <person name="Tice H."/>
            <person name="Pitluck S."/>
            <person name="Chertkov O."/>
            <person name="Brettin T."/>
            <person name="Bruce D."/>
            <person name="Detter J.C."/>
            <person name="Han C."/>
            <person name="Schmutz J."/>
            <person name="Larimer F."/>
            <person name="Land M."/>
            <person name="Hauser L."/>
            <person name="Kyrpides N."/>
            <person name="Mikhailova N."/>
            <person name="Nelson K."/>
            <person name="Gogarten J.P."/>
            <person name="Noll K."/>
            <person name="Richardson P."/>
        </authorList>
    </citation>
    <scope>NUCLEOTIDE SEQUENCE [LARGE SCALE GENOMIC DNA]</scope>
    <source>
        <strain>DSM 12029 / CIP 104789 / BI429</strain>
    </source>
</reference>
<dbReference type="EMBL" id="CP000716">
    <property type="protein sequence ID" value="ABR30824.1"/>
    <property type="molecule type" value="Genomic_DNA"/>
</dbReference>
<dbReference type="RefSeq" id="WP_012057185.1">
    <property type="nucleotide sequence ID" value="NC_009616.1"/>
</dbReference>
<dbReference type="SMR" id="A6LLM3"/>
<dbReference type="STRING" id="391009.Tmel_0963"/>
<dbReference type="KEGG" id="tme:Tmel_0963"/>
<dbReference type="eggNOG" id="COG0093">
    <property type="taxonomic scope" value="Bacteria"/>
</dbReference>
<dbReference type="HOGENOM" id="CLU_095071_2_1_0"/>
<dbReference type="OrthoDB" id="9806379at2"/>
<dbReference type="Proteomes" id="UP000001110">
    <property type="component" value="Chromosome"/>
</dbReference>
<dbReference type="GO" id="GO:0022625">
    <property type="term" value="C:cytosolic large ribosomal subunit"/>
    <property type="evidence" value="ECO:0007669"/>
    <property type="project" value="TreeGrafter"/>
</dbReference>
<dbReference type="GO" id="GO:0070180">
    <property type="term" value="F:large ribosomal subunit rRNA binding"/>
    <property type="evidence" value="ECO:0007669"/>
    <property type="project" value="TreeGrafter"/>
</dbReference>
<dbReference type="GO" id="GO:0003735">
    <property type="term" value="F:structural constituent of ribosome"/>
    <property type="evidence" value="ECO:0007669"/>
    <property type="project" value="InterPro"/>
</dbReference>
<dbReference type="GO" id="GO:0006412">
    <property type="term" value="P:translation"/>
    <property type="evidence" value="ECO:0007669"/>
    <property type="project" value="UniProtKB-UniRule"/>
</dbReference>
<dbReference type="CDD" id="cd00337">
    <property type="entry name" value="Ribosomal_uL14"/>
    <property type="match status" value="1"/>
</dbReference>
<dbReference type="FunFam" id="2.40.150.20:FF:000001">
    <property type="entry name" value="50S ribosomal protein L14"/>
    <property type="match status" value="1"/>
</dbReference>
<dbReference type="Gene3D" id="2.40.150.20">
    <property type="entry name" value="Ribosomal protein L14"/>
    <property type="match status" value="1"/>
</dbReference>
<dbReference type="HAMAP" id="MF_01367">
    <property type="entry name" value="Ribosomal_uL14"/>
    <property type="match status" value="1"/>
</dbReference>
<dbReference type="InterPro" id="IPR000218">
    <property type="entry name" value="Ribosomal_uL14"/>
</dbReference>
<dbReference type="InterPro" id="IPR005745">
    <property type="entry name" value="Ribosomal_uL14_bac-type"/>
</dbReference>
<dbReference type="InterPro" id="IPR019972">
    <property type="entry name" value="Ribosomal_uL14_CS"/>
</dbReference>
<dbReference type="InterPro" id="IPR036853">
    <property type="entry name" value="Ribosomal_uL14_sf"/>
</dbReference>
<dbReference type="NCBIfam" id="TIGR01067">
    <property type="entry name" value="rplN_bact"/>
    <property type="match status" value="1"/>
</dbReference>
<dbReference type="PANTHER" id="PTHR11761">
    <property type="entry name" value="50S/60S RIBOSOMAL PROTEIN L14/L23"/>
    <property type="match status" value="1"/>
</dbReference>
<dbReference type="PANTHER" id="PTHR11761:SF3">
    <property type="entry name" value="LARGE RIBOSOMAL SUBUNIT PROTEIN UL14M"/>
    <property type="match status" value="1"/>
</dbReference>
<dbReference type="Pfam" id="PF00238">
    <property type="entry name" value="Ribosomal_L14"/>
    <property type="match status" value="1"/>
</dbReference>
<dbReference type="SMART" id="SM01374">
    <property type="entry name" value="Ribosomal_L14"/>
    <property type="match status" value="1"/>
</dbReference>
<dbReference type="SUPFAM" id="SSF50193">
    <property type="entry name" value="Ribosomal protein L14"/>
    <property type="match status" value="1"/>
</dbReference>
<dbReference type="PROSITE" id="PS00049">
    <property type="entry name" value="RIBOSOMAL_L14"/>
    <property type="match status" value="1"/>
</dbReference>